<accession>P18631</accession>
<sequence length="567" mass="63124">MSNQMTDSTSAGSGTEHSVDTNTALKAGSPNDLKVSHEEDLNDLEKTAEETLQQKPAKEYIFVSLCCVMVAFGGFVFGWDTGTISGFVNQTDFLRRFGQEKADGSHYLSNVRTGLIVSIFNIGCAVGGIVLSNIGDRWGRRIGLITVIIIYVIGIIIQIASVDKWYQYFIGRIISGLGVGGITVLSPMLISETAPKHLRGTLVSCYQLMITFGIFLGYCTNYGTKNYSNSVQWRVPLGLCFAWAIFMVLGMMFVPESARFLVETDQIEEARKSLAKTNKVSIDDPVVKYELLKIQSSIELEKAAGNASWGELITGKPSMFRRTLMGIMIQSLQQLTGDNYFFYYGTTIFQSVGMDDSFETSIVLGIVNFASTFFALYTVDHFGRRNCLLYGCVGMVACYVVYASVGVTRLWPDGPDHPDISSKGAGNCMIVFACFYIFCFATTWAPIAYVVISESYPLRVKGKAMAIASASNWIWGFLIGFFTPFITSAIHFYYGYVFMGCMVFAFFYVYFFVPETKGLTLEEVNEMYSEGVLPWKSSSWVPSSRRGAEYDVDALQHDDKPWYKAML</sequence>
<comment type="function">
    <text>Low-affinity glucose transporter.</text>
</comment>
<comment type="subcellular location">
    <subcellularLocation>
        <location>Membrane</location>
        <topology>Multi-pass membrane protein</topology>
    </subcellularLocation>
</comment>
<comment type="similarity">
    <text evidence="3">Belongs to the major facilitator superfamily. Sugar transporter (TC 2.A.1.1) family.</text>
</comment>
<gene>
    <name type="primary">RAG1</name>
    <name type="synonym">KHT1</name>
    <name type="ordered locus">KLLA0D13310g</name>
</gene>
<protein>
    <recommendedName>
        <fullName>Low-affinity glucose transporter</fullName>
    </recommendedName>
    <alternativeName>
        <fullName>Hexose transporter 1</fullName>
    </alternativeName>
</protein>
<organism>
    <name type="scientific">Kluyveromyces lactis (strain ATCC 8585 / CBS 2359 / DSM 70799 / NBRC 1267 / NRRL Y-1140 / WM37)</name>
    <name type="common">Yeast</name>
    <name type="synonym">Candida sphaerica</name>
    <dbReference type="NCBI Taxonomy" id="284590"/>
    <lineage>
        <taxon>Eukaryota</taxon>
        <taxon>Fungi</taxon>
        <taxon>Dikarya</taxon>
        <taxon>Ascomycota</taxon>
        <taxon>Saccharomycotina</taxon>
        <taxon>Saccharomycetes</taxon>
        <taxon>Saccharomycetales</taxon>
        <taxon>Saccharomycetaceae</taxon>
        <taxon>Kluyveromyces</taxon>
    </lineage>
</organism>
<name>RAG1_KLULA</name>
<keyword id="KW-0325">Glycoprotein</keyword>
<keyword id="KW-0472">Membrane</keyword>
<keyword id="KW-1185">Reference proteome</keyword>
<keyword id="KW-0762">Sugar transport</keyword>
<keyword id="KW-0812">Transmembrane</keyword>
<keyword id="KW-1133">Transmembrane helix</keyword>
<keyword id="KW-0813">Transport</keyword>
<dbReference type="EMBL" id="X53752">
    <property type="protein sequence ID" value="CAA37781.1"/>
    <property type="molecule type" value="Genomic_DNA"/>
</dbReference>
<dbReference type="EMBL" id="CR382124">
    <property type="protein sequence ID" value="CAH00752.1"/>
    <property type="molecule type" value="Genomic_DNA"/>
</dbReference>
<dbReference type="PIR" id="S11295">
    <property type="entry name" value="S11295"/>
</dbReference>
<dbReference type="RefSeq" id="XP_453656.1">
    <property type="nucleotide sequence ID" value="XM_453656.1"/>
</dbReference>
<dbReference type="SMR" id="P18631"/>
<dbReference type="FunCoup" id="P18631">
    <property type="interactions" value="1285"/>
</dbReference>
<dbReference type="STRING" id="284590.P18631"/>
<dbReference type="GlyCosmos" id="P18631">
    <property type="glycosylation" value="1 site, No reported glycans"/>
</dbReference>
<dbReference type="PaxDb" id="284590-P18631"/>
<dbReference type="KEGG" id="kla:KLLA0_D13310g"/>
<dbReference type="eggNOG" id="KOG0254">
    <property type="taxonomic scope" value="Eukaryota"/>
</dbReference>
<dbReference type="HOGENOM" id="CLU_001265_30_1_1"/>
<dbReference type="InParanoid" id="P18631"/>
<dbReference type="OMA" id="EMFQAPR"/>
<dbReference type="Proteomes" id="UP000000598">
    <property type="component" value="Chromosome D"/>
</dbReference>
<dbReference type="GO" id="GO:0005886">
    <property type="term" value="C:plasma membrane"/>
    <property type="evidence" value="ECO:0007669"/>
    <property type="project" value="TreeGrafter"/>
</dbReference>
<dbReference type="GO" id="GO:0005351">
    <property type="term" value="F:carbohydrate:proton symporter activity"/>
    <property type="evidence" value="ECO:0007669"/>
    <property type="project" value="TreeGrafter"/>
</dbReference>
<dbReference type="GO" id="GO:0055056">
    <property type="term" value="F:D-glucose transmembrane transporter activity"/>
    <property type="evidence" value="ECO:0007669"/>
    <property type="project" value="UniProtKB-ARBA"/>
</dbReference>
<dbReference type="CDD" id="cd17356">
    <property type="entry name" value="MFS_HXT"/>
    <property type="match status" value="1"/>
</dbReference>
<dbReference type="FunFam" id="1.20.1250.20:FF:000044">
    <property type="entry name" value="Hexose transporter Hxt3p"/>
    <property type="match status" value="1"/>
</dbReference>
<dbReference type="Gene3D" id="1.20.1250.20">
    <property type="entry name" value="MFS general substrate transporter like domains"/>
    <property type="match status" value="1"/>
</dbReference>
<dbReference type="InterPro" id="IPR020846">
    <property type="entry name" value="MFS_dom"/>
</dbReference>
<dbReference type="InterPro" id="IPR005828">
    <property type="entry name" value="MFS_sugar_transport-like"/>
</dbReference>
<dbReference type="InterPro" id="IPR050360">
    <property type="entry name" value="MFS_Sugar_Transporters"/>
</dbReference>
<dbReference type="InterPro" id="IPR036259">
    <property type="entry name" value="MFS_trans_sf"/>
</dbReference>
<dbReference type="InterPro" id="IPR003663">
    <property type="entry name" value="Sugar/inositol_transpt"/>
</dbReference>
<dbReference type="InterPro" id="IPR005829">
    <property type="entry name" value="Sugar_transporter_CS"/>
</dbReference>
<dbReference type="NCBIfam" id="TIGR00879">
    <property type="entry name" value="SP"/>
    <property type="match status" value="1"/>
</dbReference>
<dbReference type="PANTHER" id="PTHR48022:SF75">
    <property type="entry name" value="GALACTOSE TRANSPORTER-RELATED"/>
    <property type="match status" value="1"/>
</dbReference>
<dbReference type="PANTHER" id="PTHR48022">
    <property type="entry name" value="PLASTIDIC GLUCOSE TRANSPORTER 4"/>
    <property type="match status" value="1"/>
</dbReference>
<dbReference type="Pfam" id="PF00083">
    <property type="entry name" value="Sugar_tr"/>
    <property type="match status" value="1"/>
</dbReference>
<dbReference type="PRINTS" id="PR00171">
    <property type="entry name" value="SUGRTRNSPORT"/>
</dbReference>
<dbReference type="SUPFAM" id="SSF103473">
    <property type="entry name" value="MFS general substrate transporter"/>
    <property type="match status" value="1"/>
</dbReference>
<dbReference type="PROSITE" id="PS50850">
    <property type="entry name" value="MFS"/>
    <property type="match status" value="1"/>
</dbReference>
<dbReference type="PROSITE" id="PS00216">
    <property type="entry name" value="SUGAR_TRANSPORT_1"/>
    <property type="match status" value="1"/>
</dbReference>
<dbReference type="PROSITE" id="PS00217">
    <property type="entry name" value="SUGAR_TRANSPORT_2"/>
    <property type="match status" value="1"/>
</dbReference>
<feature type="chain" id="PRO_0000050419" description="Low-affinity glucose transporter">
    <location>
        <begin position="1"/>
        <end position="567"/>
    </location>
</feature>
<feature type="topological domain" description="Cytoplasmic" evidence="1">
    <location>
        <begin position="18"/>
        <end position="62"/>
    </location>
</feature>
<feature type="transmembrane region" description="Helical; Name=1" evidence="1">
    <location>
        <begin position="63"/>
        <end position="83"/>
    </location>
</feature>
<feature type="topological domain" description="Extracellular" evidence="1">
    <location>
        <begin position="84"/>
        <end position="113"/>
    </location>
</feature>
<feature type="transmembrane region" description="Helical; Name=2" evidence="1">
    <location>
        <begin position="114"/>
        <end position="134"/>
    </location>
</feature>
<feature type="topological domain" description="Cytoplasmic" evidence="1">
    <location>
        <begin position="135"/>
        <end position="141"/>
    </location>
</feature>
<feature type="transmembrane region" description="Helical; Name=3" evidence="1">
    <location>
        <begin position="142"/>
        <end position="162"/>
    </location>
</feature>
<feature type="topological domain" description="Extracellular" evidence="1">
    <location>
        <begin position="163"/>
        <end position="167"/>
    </location>
</feature>
<feature type="transmembrane region" description="Helical; Name=4" evidence="1">
    <location>
        <begin position="168"/>
        <end position="188"/>
    </location>
</feature>
<feature type="topological domain" description="Cytoplasmic" evidence="1">
    <location>
        <begin position="189"/>
        <end position="199"/>
    </location>
</feature>
<feature type="transmembrane region" description="Helical; Name=5" evidence="1">
    <location>
        <begin position="200"/>
        <end position="220"/>
    </location>
</feature>
<feature type="topological domain" description="Extracellular" evidence="1">
    <location>
        <begin position="221"/>
        <end position="234"/>
    </location>
</feature>
<feature type="transmembrane region" description="Helical; Name=6" evidence="1">
    <location>
        <begin position="235"/>
        <end position="255"/>
    </location>
</feature>
<feature type="topological domain" description="Cytoplasmic" evidence="1">
    <location>
        <begin position="256"/>
        <end position="334"/>
    </location>
</feature>
<feature type="transmembrane region" description="Helical; Name=7" evidence="1">
    <location>
        <begin position="335"/>
        <end position="354"/>
    </location>
</feature>
<feature type="topological domain" description="Extracellular" evidence="1">
    <location>
        <begin position="355"/>
        <end position="358"/>
    </location>
</feature>
<feature type="transmembrane region" description="Helical; Name=8" evidence="1">
    <location>
        <begin position="359"/>
        <end position="379"/>
    </location>
</feature>
<feature type="topological domain" description="Cytoplasmic" evidence="1">
    <location>
        <begin position="380"/>
        <end position="386"/>
    </location>
</feature>
<feature type="transmembrane region" description="Helical; Name=9" evidence="1">
    <location>
        <begin position="387"/>
        <end position="407"/>
    </location>
</feature>
<feature type="topological domain" description="Extracellular" evidence="1">
    <location>
        <begin position="408"/>
        <end position="429"/>
    </location>
</feature>
<feature type="transmembrane region" description="Helical; Name=10" evidence="1">
    <location>
        <begin position="430"/>
        <end position="450"/>
    </location>
</feature>
<feature type="topological domain" description="Cytoplasmic" evidence="1">
    <location>
        <begin position="451"/>
        <end position="466"/>
    </location>
</feature>
<feature type="transmembrane region" description="Helical; Name=11" evidence="1">
    <location>
        <begin position="467"/>
        <end position="487"/>
    </location>
</feature>
<feature type="topological domain" description="Extracellular" evidence="1">
    <location>
        <begin position="488"/>
        <end position="493"/>
    </location>
</feature>
<feature type="transmembrane region" description="Helical; Name=12" evidence="1">
    <location>
        <begin position="494"/>
        <end position="514"/>
    </location>
</feature>
<feature type="topological domain" description="Cytoplasmic" evidence="1">
    <location>
        <begin position="515"/>
        <end position="567"/>
    </location>
</feature>
<feature type="region of interest" description="Disordered" evidence="2">
    <location>
        <begin position="1"/>
        <end position="36"/>
    </location>
</feature>
<feature type="compositionally biased region" description="Polar residues" evidence="2">
    <location>
        <begin position="1"/>
        <end position="24"/>
    </location>
</feature>
<feature type="glycosylation site" description="N-linked (GlcNAc...) asparagine" evidence="1">
    <location>
        <position position="89"/>
    </location>
</feature>
<evidence type="ECO:0000255" key="1"/>
<evidence type="ECO:0000256" key="2">
    <source>
        <dbReference type="SAM" id="MobiDB-lite"/>
    </source>
</evidence>
<evidence type="ECO:0000305" key="3"/>
<reference key="1">
    <citation type="journal article" date="1990" name="Nucleic Acids Res.">
        <title>RAG1 gene of the yeast Kluyveromyces lactis codes for a sugar transporter.</title>
        <authorList>
            <person name="Goffrini P."/>
            <person name="Wesolowski-Louvel M."/>
            <person name="Ferrero I."/>
            <person name="Fukuhara H."/>
        </authorList>
    </citation>
    <scope>NUCLEOTIDE SEQUENCE [GENOMIC DNA]</scope>
    <source>
        <strain>ATCC 76492 / CBS 2359/152 / CLIB 210</strain>
    </source>
</reference>
<reference key="2">
    <citation type="journal article" date="2004" name="Nature">
        <title>Genome evolution in yeasts.</title>
        <authorList>
            <person name="Dujon B."/>
            <person name="Sherman D."/>
            <person name="Fischer G."/>
            <person name="Durrens P."/>
            <person name="Casaregola S."/>
            <person name="Lafontaine I."/>
            <person name="de Montigny J."/>
            <person name="Marck C."/>
            <person name="Neuveglise C."/>
            <person name="Talla E."/>
            <person name="Goffard N."/>
            <person name="Frangeul L."/>
            <person name="Aigle M."/>
            <person name="Anthouard V."/>
            <person name="Babour A."/>
            <person name="Barbe V."/>
            <person name="Barnay S."/>
            <person name="Blanchin S."/>
            <person name="Beckerich J.-M."/>
            <person name="Beyne E."/>
            <person name="Bleykasten C."/>
            <person name="Boisrame A."/>
            <person name="Boyer J."/>
            <person name="Cattolico L."/>
            <person name="Confanioleri F."/>
            <person name="de Daruvar A."/>
            <person name="Despons L."/>
            <person name="Fabre E."/>
            <person name="Fairhead C."/>
            <person name="Ferry-Dumazet H."/>
            <person name="Groppi A."/>
            <person name="Hantraye F."/>
            <person name="Hennequin C."/>
            <person name="Jauniaux N."/>
            <person name="Joyet P."/>
            <person name="Kachouri R."/>
            <person name="Kerrest A."/>
            <person name="Koszul R."/>
            <person name="Lemaire M."/>
            <person name="Lesur I."/>
            <person name="Ma L."/>
            <person name="Muller H."/>
            <person name="Nicaud J.-M."/>
            <person name="Nikolski M."/>
            <person name="Oztas S."/>
            <person name="Ozier-Kalogeropoulos O."/>
            <person name="Pellenz S."/>
            <person name="Potier S."/>
            <person name="Richard G.-F."/>
            <person name="Straub M.-L."/>
            <person name="Suleau A."/>
            <person name="Swennen D."/>
            <person name="Tekaia F."/>
            <person name="Wesolowski-Louvel M."/>
            <person name="Westhof E."/>
            <person name="Wirth B."/>
            <person name="Zeniou-Meyer M."/>
            <person name="Zivanovic Y."/>
            <person name="Bolotin-Fukuhara M."/>
            <person name="Thierry A."/>
            <person name="Bouchier C."/>
            <person name="Caudron B."/>
            <person name="Scarpelli C."/>
            <person name="Gaillardin C."/>
            <person name="Weissenbach J."/>
            <person name="Wincker P."/>
            <person name="Souciet J.-L."/>
        </authorList>
    </citation>
    <scope>NUCLEOTIDE SEQUENCE [LARGE SCALE GENOMIC DNA]</scope>
    <source>
        <strain>ATCC 8585 / CBS 2359 / DSM 70799 / NBRC 1267 / NRRL Y-1140 / WM37</strain>
    </source>
</reference>
<reference key="3">
    <citation type="journal article" date="1992" name="Mol. Gen. Genet.">
        <title>Glucose transport in the yeast Kluyveromyces lactis. I. Properties of an inducible low-affinity glucose transporter gene.</title>
        <authorList>
            <person name="Wesolowski-Louvel M."/>
            <person name="Goffrini P."/>
            <person name="Ferrero I."/>
            <person name="Fukuhara H."/>
        </authorList>
    </citation>
    <scope>CHARACTERIZATION</scope>
</reference>
<proteinExistence type="evidence at protein level"/>